<gene>
    <name evidence="1" type="primary">adc</name>
    <name type="ordered locus">Bcen_5145</name>
</gene>
<organism>
    <name type="scientific">Burkholderia orbicola (strain AU 1054)</name>
    <dbReference type="NCBI Taxonomy" id="331271"/>
    <lineage>
        <taxon>Bacteria</taxon>
        <taxon>Pseudomonadati</taxon>
        <taxon>Pseudomonadota</taxon>
        <taxon>Betaproteobacteria</taxon>
        <taxon>Burkholderiales</taxon>
        <taxon>Burkholderiaceae</taxon>
        <taxon>Burkholderia</taxon>
        <taxon>Burkholderia cepacia complex</taxon>
        <taxon>Burkholderia orbicola</taxon>
    </lineage>
</organism>
<accession>Q1BK36</accession>
<sequence>MKPSDVRSKAFAMPLTSPAFPMGPYRFVDREFLIITYRTDPDRLREIVPEPLQVTEPLVHYEFIRMADSTGFGDYTESGQVIPVEYEGQPGGYTLAMYLDDHPPIAGGRELWGFPKKLASPTLHVNTDHILGTLDYGKVRVATGTMGYKHKELDIDEQTKRLAGPNFLLKIIPHVDGTARVCELVRYYMQDIKMKGAWTGPASLELAPHALAPVADLPVLEIVEARHLVADLTLGLGEVVYDYLAQ</sequence>
<name>ADC_BURO1</name>
<evidence type="ECO:0000255" key="1">
    <source>
        <dbReference type="HAMAP-Rule" id="MF_00597"/>
    </source>
</evidence>
<feature type="chain" id="PRO_1000025631" description="Acetoacetate decarboxylase">
    <location>
        <begin position="1"/>
        <end position="246"/>
    </location>
</feature>
<feature type="active site" description="Schiff-base intermediate with acetoacetate" evidence="1">
    <location>
        <position position="116"/>
    </location>
</feature>
<dbReference type="EC" id="4.1.1.4" evidence="1"/>
<dbReference type="EMBL" id="CP000379">
    <property type="protein sequence ID" value="ABF80019.1"/>
    <property type="molecule type" value="Genomic_DNA"/>
</dbReference>
<dbReference type="SMR" id="Q1BK36"/>
<dbReference type="HOGENOM" id="CLU_077089_0_0_4"/>
<dbReference type="GO" id="GO:0047602">
    <property type="term" value="F:acetoacetate decarboxylase activity"/>
    <property type="evidence" value="ECO:0007669"/>
    <property type="project" value="UniProtKB-UniRule"/>
</dbReference>
<dbReference type="Gene3D" id="2.40.400.10">
    <property type="entry name" value="Acetoacetate decarboxylase-like"/>
    <property type="match status" value="1"/>
</dbReference>
<dbReference type="HAMAP" id="MF_00597">
    <property type="entry name" value="ADC"/>
    <property type="match status" value="1"/>
</dbReference>
<dbReference type="InterPro" id="IPR010451">
    <property type="entry name" value="Acetoacetate_decarboxylase"/>
</dbReference>
<dbReference type="InterPro" id="IPR023653">
    <property type="entry name" value="Acetoacetate_decarboxylase_bac"/>
</dbReference>
<dbReference type="InterPro" id="IPR023375">
    <property type="entry name" value="ADC_dom_sf"/>
</dbReference>
<dbReference type="NCBIfam" id="NF002614">
    <property type="entry name" value="PRK02265.1"/>
    <property type="match status" value="1"/>
</dbReference>
<dbReference type="Pfam" id="PF06314">
    <property type="entry name" value="ADC"/>
    <property type="match status" value="1"/>
</dbReference>
<dbReference type="SUPFAM" id="SSF160104">
    <property type="entry name" value="Acetoacetate decarboxylase-like"/>
    <property type="match status" value="1"/>
</dbReference>
<reference key="1">
    <citation type="submission" date="2006-05" db="EMBL/GenBank/DDBJ databases">
        <title>Complete sequence of chromosome 2 of Burkholderia cenocepacia AU 1054.</title>
        <authorList>
            <consortium name="US DOE Joint Genome Institute"/>
            <person name="Copeland A."/>
            <person name="Lucas S."/>
            <person name="Lapidus A."/>
            <person name="Barry K."/>
            <person name="Detter J.C."/>
            <person name="Glavina del Rio T."/>
            <person name="Hammon N."/>
            <person name="Israni S."/>
            <person name="Dalin E."/>
            <person name="Tice H."/>
            <person name="Pitluck S."/>
            <person name="Chain P."/>
            <person name="Malfatti S."/>
            <person name="Shin M."/>
            <person name="Vergez L."/>
            <person name="Schmutz J."/>
            <person name="Larimer F."/>
            <person name="Land M."/>
            <person name="Hauser L."/>
            <person name="Kyrpides N."/>
            <person name="Lykidis A."/>
            <person name="LiPuma J.J."/>
            <person name="Konstantinidis K."/>
            <person name="Tiedje J.M."/>
            <person name="Richardson P."/>
        </authorList>
    </citation>
    <scope>NUCLEOTIDE SEQUENCE [LARGE SCALE GENOMIC DNA]</scope>
    <source>
        <strain>AU 1054</strain>
    </source>
</reference>
<protein>
    <recommendedName>
        <fullName evidence="1">Acetoacetate decarboxylase</fullName>
        <shortName evidence="1">AAD</shortName>
        <shortName evidence="1">ADC</shortName>
        <ecNumber evidence="1">4.1.1.4</ecNumber>
    </recommendedName>
</protein>
<keyword id="KW-0210">Decarboxylase</keyword>
<keyword id="KW-0456">Lyase</keyword>
<keyword id="KW-0704">Schiff base</keyword>
<proteinExistence type="inferred from homology"/>
<comment type="function">
    <text evidence="1">Catalyzes the conversion of acetoacetate to acetone and carbon dioxide.</text>
</comment>
<comment type="catalytic activity">
    <reaction evidence="1">
        <text>acetoacetate + H(+) = acetone + CO2</text>
        <dbReference type="Rhea" id="RHEA:19729"/>
        <dbReference type="ChEBI" id="CHEBI:13705"/>
        <dbReference type="ChEBI" id="CHEBI:15347"/>
        <dbReference type="ChEBI" id="CHEBI:15378"/>
        <dbReference type="ChEBI" id="CHEBI:16526"/>
        <dbReference type="EC" id="4.1.1.4"/>
    </reaction>
</comment>
<comment type="similarity">
    <text evidence="1">Belongs to the ADC family.</text>
</comment>